<accession>A4WHQ8</accession>
<organism>
    <name type="scientific">Pyrobaculum arsenaticum (strain DSM 13514 / JCM 11321 / PZ6)</name>
    <dbReference type="NCBI Taxonomy" id="340102"/>
    <lineage>
        <taxon>Archaea</taxon>
        <taxon>Thermoproteota</taxon>
        <taxon>Thermoprotei</taxon>
        <taxon>Thermoproteales</taxon>
        <taxon>Thermoproteaceae</taxon>
        <taxon>Pyrobaculum</taxon>
    </lineage>
</organism>
<reference key="1">
    <citation type="submission" date="2007-04" db="EMBL/GenBank/DDBJ databases">
        <title>Complete sequence of Pyrobaculum arsenaticum DSM 13514.</title>
        <authorList>
            <consortium name="US DOE Joint Genome Institute"/>
            <person name="Copeland A."/>
            <person name="Lucas S."/>
            <person name="Lapidus A."/>
            <person name="Barry K."/>
            <person name="Glavina del Rio T."/>
            <person name="Dalin E."/>
            <person name="Tice H."/>
            <person name="Pitluck S."/>
            <person name="Chain P."/>
            <person name="Malfatti S."/>
            <person name="Shin M."/>
            <person name="Vergez L."/>
            <person name="Schmutz J."/>
            <person name="Larimer F."/>
            <person name="Land M."/>
            <person name="Hauser L."/>
            <person name="Kyrpides N."/>
            <person name="Mikhailova N."/>
            <person name="Cozen A.E."/>
            <person name="Fitz-Gibbon S.T."/>
            <person name="House C.H."/>
            <person name="Saltikov C."/>
            <person name="Lowe T.M."/>
            <person name="Richardson P."/>
        </authorList>
    </citation>
    <scope>NUCLEOTIDE SEQUENCE [LARGE SCALE GENOMIC DNA]</scope>
    <source>
        <strain>ATCC 700994 / DSM 13514 / JCM 11321 / PZ6</strain>
    </source>
</reference>
<keyword id="KW-0687">Ribonucleoprotein</keyword>
<keyword id="KW-0689">Ribosomal protein</keyword>
<keyword id="KW-0694">RNA-binding</keyword>
<keyword id="KW-0699">rRNA-binding</keyword>
<gene>
    <name evidence="1" type="primary">rps5</name>
    <name type="ordered locus">Pars_0313</name>
</gene>
<sequence length="202" mass="22212">MSVVDMSLWEPRTELGRMVKEGKIRTIDEVFANNYIIKEPEIVDILVPGLKQELLNVNIVQRQTHAGERSLFQAVVAVGNEDGYVGVGIGKARQVRQAIEKAVREAKLNLIPVRRGCGSWKCSCDEPHSVPFVVKGKSGSVEVTLIPAPKGVGLVAGDVAKAVLRLAGVKDVWTHTRGDTRTTLNFALAVYNALRNTYYFKI</sequence>
<evidence type="ECO:0000255" key="1">
    <source>
        <dbReference type="HAMAP-Rule" id="MF_01307"/>
    </source>
</evidence>
<evidence type="ECO:0000305" key="2"/>
<protein>
    <recommendedName>
        <fullName evidence="1">Small ribosomal subunit protein uS5</fullName>
    </recommendedName>
    <alternativeName>
        <fullName evidence="2">30S ribosomal protein S5</fullName>
    </alternativeName>
</protein>
<feature type="chain" id="PRO_0000293216" description="Small ribosomal subunit protein uS5">
    <location>
        <begin position="1"/>
        <end position="202"/>
    </location>
</feature>
<feature type="domain" description="S5 DRBM" evidence="1">
    <location>
        <begin position="50"/>
        <end position="113"/>
    </location>
</feature>
<dbReference type="EMBL" id="CP000660">
    <property type="protein sequence ID" value="ABP49925.1"/>
    <property type="status" value="ALT_INIT"/>
    <property type="molecule type" value="Genomic_DNA"/>
</dbReference>
<dbReference type="SMR" id="A4WHQ8"/>
<dbReference type="STRING" id="340102.Pars_0313"/>
<dbReference type="KEGG" id="pas:Pars_0313"/>
<dbReference type="HOGENOM" id="CLU_065898_0_1_2"/>
<dbReference type="OrthoDB" id="38155at2157"/>
<dbReference type="Proteomes" id="UP000001567">
    <property type="component" value="Chromosome"/>
</dbReference>
<dbReference type="GO" id="GO:0022627">
    <property type="term" value="C:cytosolic small ribosomal subunit"/>
    <property type="evidence" value="ECO:0007669"/>
    <property type="project" value="TreeGrafter"/>
</dbReference>
<dbReference type="GO" id="GO:0019843">
    <property type="term" value="F:rRNA binding"/>
    <property type="evidence" value="ECO:0007669"/>
    <property type="project" value="UniProtKB-UniRule"/>
</dbReference>
<dbReference type="GO" id="GO:0003735">
    <property type="term" value="F:structural constituent of ribosome"/>
    <property type="evidence" value="ECO:0007669"/>
    <property type="project" value="InterPro"/>
</dbReference>
<dbReference type="GO" id="GO:0006412">
    <property type="term" value="P:translation"/>
    <property type="evidence" value="ECO:0007669"/>
    <property type="project" value="UniProtKB-UniRule"/>
</dbReference>
<dbReference type="FunFam" id="3.30.160.20:FF:000002">
    <property type="entry name" value="40S ribosomal protein S2"/>
    <property type="match status" value="1"/>
</dbReference>
<dbReference type="FunFam" id="3.30.230.10:FF:000004">
    <property type="entry name" value="40S ribosomal protein S2"/>
    <property type="match status" value="1"/>
</dbReference>
<dbReference type="Gene3D" id="3.30.160.20">
    <property type="match status" value="1"/>
</dbReference>
<dbReference type="Gene3D" id="3.30.230.10">
    <property type="match status" value="1"/>
</dbReference>
<dbReference type="HAMAP" id="MF_01307_A">
    <property type="entry name" value="Ribosomal_uS5_A"/>
    <property type="match status" value="1"/>
</dbReference>
<dbReference type="InterPro" id="IPR020568">
    <property type="entry name" value="Ribosomal_Su5_D2-typ_SF"/>
</dbReference>
<dbReference type="InterPro" id="IPR000851">
    <property type="entry name" value="Ribosomal_uS5"/>
</dbReference>
<dbReference type="InterPro" id="IPR047866">
    <property type="entry name" value="Ribosomal_uS5_arc"/>
</dbReference>
<dbReference type="InterPro" id="IPR005324">
    <property type="entry name" value="Ribosomal_uS5_C"/>
</dbReference>
<dbReference type="InterPro" id="IPR005711">
    <property type="entry name" value="Ribosomal_uS5_euk/arc"/>
</dbReference>
<dbReference type="InterPro" id="IPR013810">
    <property type="entry name" value="Ribosomal_uS5_N"/>
</dbReference>
<dbReference type="InterPro" id="IPR018192">
    <property type="entry name" value="Ribosomal_uS5_N_CS"/>
</dbReference>
<dbReference type="InterPro" id="IPR014721">
    <property type="entry name" value="Ribsml_uS5_D2-typ_fold_subgr"/>
</dbReference>
<dbReference type="NCBIfam" id="NF003125">
    <property type="entry name" value="PRK04044.1"/>
    <property type="match status" value="1"/>
</dbReference>
<dbReference type="NCBIfam" id="TIGR01020">
    <property type="entry name" value="uS5_euk_arch"/>
    <property type="match status" value="1"/>
</dbReference>
<dbReference type="PANTHER" id="PTHR13718:SF4">
    <property type="entry name" value="40S RIBOSOMAL PROTEIN S2"/>
    <property type="match status" value="1"/>
</dbReference>
<dbReference type="PANTHER" id="PTHR13718">
    <property type="entry name" value="RIBOSOMAL S SUBUNIT"/>
    <property type="match status" value="1"/>
</dbReference>
<dbReference type="Pfam" id="PF00333">
    <property type="entry name" value="Ribosomal_S5"/>
    <property type="match status" value="1"/>
</dbReference>
<dbReference type="Pfam" id="PF03719">
    <property type="entry name" value="Ribosomal_S5_C"/>
    <property type="match status" value="1"/>
</dbReference>
<dbReference type="SUPFAM" id="SSF54768">
    <property type="entry name" value="dsRNA-binding domain-like"/>
    <property type="match status" value="1"/>
</dbReference>
<dbReference type="SUPFAM" id="SSF54211">
    <property type="entry name" value="Ribosomal protein S5 domain 2-like"/>
    <property type="match status" value="1"/>
</dbReference>
<dbReference type="PROSITE" id="PS00585">
    <property type="entry name" value="RIBOSOMAL_S5"/>
    <property type="match status" value="1"/>
</dbReference>
<dbReference type="PROSITE" id="PS50881">
    <property type="entry name" value="S5_DSRBD"/>
    <property type="match status" value="1"/>
</dbReference>
<comment type="function">
    <text evidence="1">With S4 and S12 plays an important role in translational accuracy.</text>
</comment>
<comment type="subunit">
    <text evidence="1">Part of the 30S ribosomal subunit. Contacts protein S4.</text>
</comment>
<comment type="domain">
    <text>The N-terminal domain interacts with the head of the 30S subunit; the C-terminal domain interacts with the body and contacts protein S4. The interaction surface between S4 and S5 is involved in control of translational fidelity.</text>
</comment>
<comment type="similarity">
    <text evidence="1">Belongs to the universal ribosomal protein uS5 family.</text>
</comment>
<comment type="sequence caution" evidence="2">
    <conflict type="erroneous initiation">
        <sequence resource="EMBL-CDS" id="ABP49925"/>
    </conflict>
    <text>Truncated N-terminus.</text>
</comment>
<proteinExistence type="inferred from homology"/>
<name>RS5_PYRAR</name>